<organism>
    <name type="scientific">Arabidopsis thaliana</name>
    <name type="common">Mouse-ear cress</name>
    <dbReference type="NCBI Taxonomy" id="3702"/>
    <lineage>
        <taxon>Eukaryota</taxon>
        <taxon>Viridiplantae</taxon>
        <taxon>Streptophyta</taxon>
        <taxon>Embryophyta</taxon>
        <taxon>Tracheophyta</taxon>
        <taxon>Spermatophyta</taxon>
        <taxon>Magnoliopsida</taxon>
        <taxon>eudicotyledons</taxon>
        <taxon>Gunneridae</taxon>
        <taxon>Pentapetalae</taxon>
        <taxon>rosids</taxon>
        <taxon>malvids</taxon>
        <taxon>Brassicales</taxon>
        <taxon>Brassicaceae</taxon>
        <taxon>Camelineae</taxon>
        <taxon>Arabidopsis</taxon>
    </lineage>
</organism>
<name>PP400_ARATH</name>
<sequence>MLIRCVAVAKTRFNTTGVVSRLVSSLADGSDTSSVANRNSLKEILRKNGPRRSVTSLLQERIDSGHAVSLSELRLISKRLIRSNRYDLALQMMEWMENQKDIEFSVYDIALRLDLIIKTHGLKQGEEYFEKLLHSSVSMRVAKSAYLPLLRAYVKNKMVKEAEALMEKLNGLGFLVTPHPFNEMMKLYEASGQYEKVVMVVSMMKGNKIPRNVLSYNLWMNACCEVSGVAAVETVYKEMVGDKSVEVGWSSLCTLANVYIKSGFDEKARLVLEDAEKMLNRSNRLGYFFLITLYASLGNKEGVVRLWEVSKSVCGRISCVNYICVLSSLVKTGDLEEAERVFSEWEAQCFNYDVRVSNVLLGAYVRNGEIRKAESLHGCVLERGGTPNYKTWEILMEGWVKCENMEKAIDAMHQVFVLMRRCHWRPSHNIVMAIAEYFEKEEKIEEATAYVRDLHRLGLASLPLYRLLLRMHEHAKRPAYDIYEMMKLDKL</sequence>
<reference key="1">
    <citation type="journal article" date="2000" name="Nature">
        <title>Sequence and analysis of chromosome 5 of the plant Arabidopsis thaliana.</title>
        <authorList>
            <person name="Tabata S."/>
            <person name="Kaneko T."/>
            <person name="Nakamura Y."/>
            <person name="Kotani H."/>
            <person name="Kato T."/>
            <person name="Asamizu E."/>
            <person name="Miyajima N."/>
            <person name="Sasamoto S."/>
            <person name="Kimura T."/>
            <person name="Hosouchi T."/>
            <person name="Kawashima K."/>
            <person name="Kohara M."/>
            <person name="Matsumoto M."/>
            <person name="Matsuno A."/>
            <person name="Muraki A."/>
            <person name="Nakayama S."/>
            <person name="Nakazaki N."/>
            <person name="Naruo K."/>
            <person name="Okumura S."/>
            <person name="Shinpo S."/>
            <person name="Takeuchi C."/>
            <person name="Wada T."/>
            <person name="Watanabe A."/>
            <person name="Yamada M."/>
            <person name="Yasuda M."/>
            <person name="Sato S."/>
            <person name="de la Bastide M."/>
            <person name="Huang E."/>
            <person name="Spiegel L."/>
            <person name="Gnoj L."/>
            <person name="O'Shaughnessy A."/>
            <person name="Preston R."/>
            <person name="Habermann K."/>
            <person name="Murray J."/>
            <person name="Johnson D."/>
            <person name="Rohlfing T."/>
            <person name="Nelson J."/>
            <person name="Stoneking T."/>
            <person name="Pepin K."/>
            <person name="Spieth J."/>
            <person name="Sekhon M."/>
            <person name="Armstrong J."/>
            <person name="Becker M."/>
            <person name="Belter E."/>
            <person name="Cordum H."/>
            <person name="Cordes M."/>
            <person name="Courtney L."/>
            <person name="Courtney W."/>
            <person name="Dante M."/>
            <person name="Du H."/>
            <person name="Edwards J."/>
            <person name="Fryman J."/>
            <person name="Haakensen B."/>
            <person name="Lamar E."/>
            <person name="Latreille P."/>
            <person name="Leonard S."/>
            <person name="Meyer R."/>
            <person name="Mulvaney E."/>
            <person name="Ozersky P."/>
            <person name="Riley A."/>
            <person name="Strowmatt C."/>
            <person name="Wagner-McPherson C."/>
            <person name="Wollam A."/>
            <person name="Yoakum M."/>
            <person name="Bell M."/>
            <person name="Dedhia N."/>
            <person name="Parnell L."/>
            <person name="Shah R."/>
            <person name="Rodriguez M."/>
            <person name="Hoon See L."/>
            <person name="Vil D."/>
            <person name="Baker J."/>
            <person name="Kirchoff K."/>
            <person name="Toth K."/>
            <person name="King L."/>
            <person name="Bahret A."/>
            <person name="Miller B."/>
            <person name="Marra M.A."/>
            <person name="Martienssen R."/>
            <person name="McCombie W.R."/>
            <person name="Wilson R.K."/>
            <person name="Murphy G."/>
            <person name="Bancroft I."/>
            <person name="Volckaert G."/>
            <person name="Wambutt R."/>
            <person name="Duesterhoeft A."/>
            <person name="Stiekema W."/>
            <person name="Pohl T."/>
            <person name="Entian K.-D."/>
            <person name="Terryn N."/>
            <person name="Hartley N."/>
            <person name="Bent E."/>
            <person name="Johnson S."/>
            <person name="Langham S.-A."/>
            <person name="McCullagh B."/>
            <person name="Robben J."/>
            <person name="Grymonprez B."/>
            <person name="Zimmermann W."/>
            <person name="Ramsperger U."/>
            <person name="Wedler H."/>
            <person name="Balke K."/>
            <person name="Wedler E."/>
            <person name="Peters S."/>
            <person name="van Staveren M."/>
            <person name="Dirkse W."/>
            <person name="Mooijman P."/>
            <person name="Klein Lankhorst R."/>
            <person name="Weitzenegger T."/>
            <person name="Bothe G."/>
            <person name="Rose M."/>
            <person name="Hauf J."/>
            <person name="Berneiser S."/>
            <person name="Hempel S."/>
            <person name="Feldpausch M."/>
            <person name="Lamberth S."/>
            <person name="Villarroel R."/>
            <person name="Gielen J."/>
            <person name="Ardiles W."/>
            <person name="Bents O."/>
            <person name="Lemcke K."/>
            <person name="Kolesov G."/>
            <person name="Mayer K.F.X."/>
            <person name="Rudd S."/>
            <person name="Schoof H."/>
            <person name="Schueller C."/>
            <person name="Zaccaria P."/>
            <person name="Mewes H.-W."/>
            <person name="Bevan M."/>
            <person name="Fransz P.F."/>
        </authorList>
    </citation>
    <scope>NUCLEOTIDE SEQUENCE [LARGE SCALE GENOMIC DNA]</scope>
    <source>
        <strain>cv. Columbia</strain>
    </source>
</reference>
<reference key="2">
    <citation type="journal article" date="2017" name="Plant J.">
        <title>Araport11: a complete reannotation of the Arabidopsis thaliana reference genome.</title>
        <authorList>
            <person name="Cheng C.Y."/>
            <person name="Krishnakumar V."/>
            <person name="Chan A.P."/>
            <person name="Thibaud-Nissen F."/>
            <person name="Schobel S."/>
            <person name="Town C.D."/>
        </authorList>
    </citation>
    <scope>GENOME REANNOTATION</scope>
    <source>
        <strain>cv. Columbia</strain>
    </source>
</reference>
<reference key="3">
    <citation type="journal article" date="2004" name="Genome Res.">
        <title>Whole genome sequence comparisons and 'full-length' cDNA sequences: a combined approach to evaluate and improve Arabidopsis genome annotation.</title>
        <authorList>
            <person name="Castelli V."/>
            <person name="Aury J.-M."/>
            <person name="Jaillon O."/>
            <person name="Wincker P."/>
            <person name="Clepet C."/>
            <person name="Menard M."/>
            <person name="Cruaud C."/>
            <person name="Quetier F."/>
            <person name="Scarpelli C."/>
            <person name="Schaechter V."/>
            <person name="Temple G."/>
            <person name="Caboche M."/>
            <person name="Weissenbach J."/>
            <person name="Salanoubat M."/>
        </authorList>
    </citation>
    <scope>NUCLEOTIDE SEQUENCE [LARGE SCALE MRNA] OF 10-486</scope>
    <source>
        <strain>cv. Columbia</strain>
    </source>
</reference>
<reference key="4">
    <citation type="journal article" date="2004" name="Plant Cell">
        <title>Genome-wide analysis of Arabidopsis pentatricopeptide repeat proteins reveals their essential role in organelle biogenesis.</title>
        <authorList>
            <person name="Lurin C."/>
            <person name="Andres C."/>
            <person name="Aubourg S."/>
            <person name="Bellaoui M."/>
            <person name="Bitton F."/>
            <person name="Bruyere C."/>
            <person name="Caboche M."/>
            <person name="Debast C."/>
            <person name="Gualberto J."/>
            <person name="Hoffmann B."/>
            <person name="Lecharny A."/>
            <person name="Le Ret M."/>
            <person name="Martin-Magniette M.-L."/>
            <person name="Mireau H."/>
            <person name="Peeters N."/>
            <person name="Renou J.-P."/>
            <person name="Szurek B."/>
            <person name="Taconnat L."/>
            <person name="Small I."/>
        </authorList>
    </citation>
    <scope>GENE FAMILY</scope>
</reference>
<accession>Q3E911</accession>
<comment type="similarity">
    <text evidence="1">Belongs to the PPR family. P subfamily.</text>
</comment>
<comment type="online information" name="Pentatricopeptide repeat proteins">
    <link uri="https://ppr.plantenergy.uwa.edu.au"/>
</comment>
<protein>
    <recommendedName>
        <fullName>Pentatricopeptide repeat-containing protein At5g27460</fullName>
    </recommendedName>
</protein>
<keyword id="KW-1185">Reference proteome</keyword>
<keyword id="KW-0677">Repeat</keyword>
<proteinExistence type="evidence at transcript level"/>
<gene>
    <name type="ordered locus">At5g27460</name>
    <name type="ORF">F21A20.170</name>
</gene>
<dbReference type="EMBL" id="AC007123">
    <property type="status" value="NOT_ANNOTATED_CDS"/>
    <property type="molecule type" value="Genomic_DNA"/>
</dbReference>
<dbReference type="EMBL" id="CP002688">
    <property type="protein sequence ID" value="AED93691.1"/>
    <property type="molecule type" value="Genomic_DNA"/>
</dbReference>
<dbReference type="EMBL" id="BX829458">
    <property type="status" value="NOT_ANNOTATED_CDS"/>
    <property type="molecule type" value="mRNA"/>
</dbReference>
<dbReference type="RefSeq" id="NP_198098.1">
    <property type="nucleotide sequence ID" value="NM_122628.3"/>
</dbReference>
<dbReference type="SMR" id="Q3E911"/>
<dbReference type="FunCoup" id="Q3E911">
    <property type="interactions" value="588"/>
</dbReference>
<dbReference type="STRING" id="3702.Q3E911"/>
<dbReference type="PaxDb" id="3702-AT5G27460.1"/>
<dbReference type="ProteomicsDB" id="249281"/>
<dbReference type="EnsemblPlants" id="AT5G27460.1">
    <property type="protein sequence ID" value="AT5G27460.1"/>
    <property type="gene ID" value="AT5G27460"/>
</dbReference>
<dbReference type="GeneID" id="832805"/>
<dbReference type="Gramene" id="AT5G27460.1">
    <property type="protein sequence ID" value="AT5G27460.1"/>
    <property type="gene ID" value="AT5G27460"/>
</dbReference>
<dbReference type="KEGG" id="ath:AT5G27460"/>
<dbReference type="Araport" id="AT5G27460"/>
<dbReference type="TAIR" id="AT5G27460"/>
<dbReference type="eggNOG" id="KOG4197">
    <property type="taxonomic scope" value="Eukaryota"/>
</dbReference>
<dbReference type="HOGENOM" id="CLU_019802_3_1_1"/>
<dbReference type="InParanoid" id="Q3E911"/>
<dbReference type="OMA" id="LNWMETQ"/>
<dbReference type="PhylomeDB" id="Q3E911"/>
<dbReference type="PRO" id="PR:Q3E911"/>
<dbReference type="Proteomes" id="UP000006548">
    <property type="component" value="Chromosome 5"/>
</dbReference>
<dbReference type="ExpressionAtlas" id="Q3E911">
    <property type="expression patterns" value="baseline and differential"/>
</dbReference>
<dbReference type="GO" id="GO:0003729">
    <property type="term" value="F:mRNA binding"/>
    <property type="evidence" value="ECO:0007669"/>
    <property type="project" value="UniProtKB-ARBA"/>
</dbReference>
<dbReference type="FunFam" id="1.25.40.10:FF:000760">
    <property type="entry name" value="Pentatricopeptide repeat-containing protein At5g27460"/>
    <property type="match status" value="1"/>
</dbReference>
<dbReference type="FunFam" id="1.25.40.10:FF:002288">
    <property type="entry name" value="Pentatricopeptide repeat-containing protein At5g27460"/>
    <property type="match status" value="1"/>
</dbReference>
<dbReference type="FunFam" id="1.25.40.10:FF:001916">
    <property type="entry name" value="Pentatricopeptide repeat-containing protein, mitochondrial"/>
    <property type="match status" value="1"/>
</dbReference>
<dbReference type="Gene3D" id="1.25.40.10">
    <property type="entry name" value="Tetratricopeptide repeat domain"/>
    <property type="match status" value="3"/>
</dbReference>
<dbReference type="InterPro" id="IPR002885">
    <property type="entry name" value="Pentatricopeptide_rpt"/>
</dbReference>
<dbReference type="InterPro" id="IPR011990">
    <property type="entry name" value="TPR-like_helical_dom_sf"/>
</dbReference>
<dbReference type="NCBIfam" id="TIGR00756">
    <property type="entry name" value="PPR"/>
    <property type="match status" value="1"/>
</dbReference>
<dbReference type="PANTHER" id="PTHR45717:SF13">
    <property type="entry name" value="OS02G0796400 PROTEIN"/>
    <property type="match status" value="1"/>
</dbReference>
<dbReference type="PANTHER" id="PTHR45717">
    <property type="entry name" value="OS12G0527900 PROTEIN"/>
    <property type="match status" value="1"/>
</dbReference>
<dbReference type="Pfam" id="PF01535">
    <property type="entry name" value="PPR"/>
    <property type="match status" value="2"/>
</dbReference>
<dbReference type="Pfam" id="PF13812">
    <property type="entry name" value="PPR_3"/>
    <property type="match status" value="1"/>
</dbReference>
<dbReference type="SUPFAM" id="SSF48452">
    <property type="entry name" value="TPR-like"/>
    <property type="match status" value="1"/>
</dbReference>
<dbReference type="PROSITE" id="PS51375">
    <property type="entry name" value="PPR"/>
    <property type="match status" value="7"/>
</dbReference>
<feature type="chain" id="PRO_0000363537" description="Pentatricopeptide repeat-containing protein At5g27460">
    <location>
        <begin position="1"/>
        <end position="491"/>
    </location>
</feature>
<feature type="repeat" description="PPR 1">
    <location>
        <begin position="69"/>
        <end position="99"/>
    </location>
</feature>
<feature type="repeat" description="PPR 2">
    <location>
        <begin position="105"/>
        <end position="139"/>
    </location>
</feature>
<feature type="repeat" description="PPR 3">
    <location>
        <begin position="142"/>
        <end position="176"/>
    </location>
</feature>
<feature type="repeat" description="PPR 4">
    <location>
        <begin position="177"/>
        <end position="211"/>
    </location>
</feature>
<feature type="repeat" description="PPR 5">
    <location>
        <begin position="212"/>
        <end position="246"/>
    </location>
</feature>
<feature type="repeat" description="PPR 6">
    <location>
        <begin position="248"/>
        <end position="278"/>
    </location>
</feature>
<feature type="repeat" description="PPR 7">
    <location>
        <begin position="283"/>
        <end position="313"/>
    </location>
</feature>
<feature type="repeat" description="PPR 8">
    <location>
        <begin position="318"/>
        <end position="348"/>
    </location>
</feature>
<feature type="repeat" description="PPR 9">
    <location>
        <begin position="353"/>
        <end position="387"/>
    </location>
</feature>
<feature type="repeat" description="PPR 10">
    <location>
        <begin position="388"/>
        <end position="426"/>
    </location>
</feature>
<feature type="sequence conflict" description="In Ref. 3; BX829458." evidence="1" ref="3">
    <original>V</original>
    <variation>L</variation>
    <location>
        <position position="431"/>
    </location>
</feature>
<evidence type="ECO:0000305" key="1"/>